<organism>
    <name type="scientific">Beijerinckia indica subsp. indica (strain ATCC 9039 / DSM 1715 / NCIMB 8712)</name>
    <dbReference type="NCBI Taxonomy" id="395963"/>
    <lineage>
        <taxon>Bacteria</taxon>
        <taxon>Pseudomonadati</taxon>
        <taxon>Pseudomonadota</taxon>
        <taxon>Alphaproteobacteria</taxon>
        <taxon>Hyphomicrobiales</taxon>
        <taxon>Beijerinckiaceae</taxon>
        <taxon>Beijerinckia</taxon>
    </lineage>
</organism>
<protein>
    <recommendedName>
        <fullName evidence="1">Homoserine kinase</fullName>
        <shortName evidence="1">HK</shortName>
        <shortName evidence="1">HSK</shortName>
        <ecNumber evidence="1">2.7.1.39</ecNumber>
    </recommendedName>
</protein>
<keyword id="KW-0028">Amino-acid biosynthesis</keyword>
<keyword id="KW-0067">ATP-binding</keyword>
<keyword id="KW-0418">Kinase</keyword>
<keyword id="KW-0547">Nucleotide-binding</keyword>
<keyword id="KW-1185">Reference proteome</keyword>
<keyword id="KW-0791">Threonine biosynthesis</keyword>
<keyword id="KW-0808">Transferase</keyword>
<evidence type="ECO:0000255" key="1">
    <source>
        <dbReference type="HAMAP-Rule" id="MF_00301"/>
    </source>
</evidence>
<comment type="catalytic activity">
    <reaction evidence="1">
        <text>L-homoserine + ATP = O-phospho-L-homoserine + ADP + H(+)</text>
        <dbReference type="Rhea" id="RHEA:13985"/>
        <dbReference type="ChEBI" id="CHEBI:15378"/>
        <dbReference type="ChEBI" id="CHEBI:30616"/>
        <dbReference type="ChEBI" id="CHEBI:57476"/>
        <dbReference type="ChEBI" id="CHEBI:57590"/>
        <dbReference type="ChEBI" id="CHEBI:456216"/>
        <dbReference type="EC" id="2.7.1.39"/>
    </reaction>
</comment>
<comment type="pathway">
    <text evidence="1">Amino-acid biosynthesis; L-threonine biosynthesis; L-threonine from L-aspartate: step 4/5.</text>
</comment>
<comment type="similarity">
    <text evidence="1">Belongs to the pseudomonas-type ThrB family.</text>
</comment>
<feature type="chain" id="PRO_1000115423" description="Homoserine kinase">
    <location>
        <begin position="1"/>
        <end position="321"/>
    </location>
</feature>
<reference key="1">
    <citation type="journal article" date="2010" name="J. Bacteriol.">
        <title>Complete genome sequence of Beijerinckia indica subsp. indica.</title>
        <authorList>
            <person name="Tamas I."/>
            <person name="Dedysh S.N."/>
            <person name="Liesack W."/>
            <person name="Stott M.B."/>
            <person name="Alam M."/>
            <person name="Murrell J.C."/>
            <person name="Dunfield P.F."/>
        </authorList>
    </citation>
    <scope>NUCLEOTIDE SEQUENCE [LARGE SCALE GENOMIC DNA]</scope>
    <source>
        <strain>ATCC 9039 / DSM 1715 / NCIMB 8712</strain>
    </source>
</reference>
<accession>B2IHG2</accession>
<dbReference type="EC" id="2.7.1.39" evidence="1"/>
<dbReference type="EMBL" id="CP001016">
    <property type="protein sequence ID" value="ACB95947.1"/>
    <property type="molecule type" value="Genomic_DNA"/>
</dbReference>
<dbReference type="RefSeq" id="WP_012385300.1">
    <property type="nucleotide sequence ID" value="NC_010581.1"/>
</dbReference>
<dbReference type="SMR" id="B2IHG2"/>
<dbReference type="STRING" id="395963.Bind_2334"/>
<dbReference type="KEGG" id="bid:Bind_2334"/>
<dbReference type="eggNOG" id="COG2334">
    <property type="taxonomic scope" value="Bacteria"/>
</dbReference>
<dbReference type="HOGENOM" id="CLU_053300_1_0_5"/>
<dbReference type="OrthoDB" id="9777460at2"/>
<dbReference type="UniPathway" id="UPA00050">
    <property type="reaction ID" value="UER00064"/>
</dbReference>
<dbReference type="Proteomes" id="UP000001695">
    <property type="component" value="Chromosome"/>
</dbReference>
<dbReference type="GO" id="GO:0005524">
    <property type="term" value="F:ATP binding"/>
    <property type="evidence" value="ECO:0007669"/>
    <property type="project" value="UniProtKB-KW"/>
</dbReference>
<dbReference type="GO" id="GO:0004413">
    <property type="term" value="F:homoserine kinase activity"/>
    <property type="evidence" value="ECO:0007669"/>
    <property type="project" value="UniProtKB-UniRule"/>
</dbReference>
<dbReference type="GO" id="GO:0009088">
    <property type="term" value="P:threonine biosynthetic process"/>
    <property type="evidence" value="ECO:0007669"/>
    <property type="project" value="UniProtKB-UniRule"/>
</dbReference>
<dbReference type="CDD" id="cd05153">
    <property type="entry name" value="HomoserineK_II"/>
    <property type="match status" value="1"/>
</dbReference>
<dbReference type="Gene3D" id="3.90.1200.10">
    <property type="match status" value="1"/>
</dbReference>
<dbReference type="Gene3D" id="3.30.200.20">
    <property type="entry name" value="Phosphorylase Kinase, domain 1"/>
    <property type="match status" value="1"/>
</dbReference>
<dbReference type="HAMAP" id="MF_00301">
    <property type="entry name" value="Homoser_kinase_2"/>
    <property type="match status" value="1"/>
</dbReference>
<dbReference type="InterPro" id="IPR002575">
    <property type="entry name" value="Aminoglycoside_PTrfase"/>
</dbReference>
<dbReference type="InterPro" id="IPR005280">
    <property type="entry name" value="Homoserine_kinase_II"/>
</dbReference>
<dbReference type="InterPro" id="IPR011009">
    <property type="entry name" value="Kinase-like_dom_sf"/>
</dbReference>
<dbReference type="InterPro" id="IPR050249">
    <property type="entry name" value="Pseudomonas-type_ThrB"/>
</dbReference>
<dbReference type="NCBIfam" id="NF003558">
    <property type="entry name" value="PRK05231.1"/>
    <property type="match status" value="1"/>
</dbReference>
<dbReference type="NCBIfam" id="TIGR00938">
    <property type="entry name" value="thrB_alt"/>
    <property type="match status" value="1"/>
</dbReference>
<dbReference type="PANTHER" id="PTHR21064:SF6">
    <property type="entry name" value="AMINOGLYCOSIDE PHOSPHOTRANSFERASE DOMAIN-CONTAINING PROTEIN"/>
    <property type="match status" value="1"/>
</dbReference>
<dbReference type="PANTHER" id="PTHR21064">
    <property type="entry name" value="AMINOGLYCOSIDE PHOSPHOTRANSFERASE DOMAIN-CONTAINING PROTEIN-RELATED"/>
    <property type="match status" value="1"/>
</dbReference>
<dbReference type="Pfam" id="PF01636">
    <property type="entry name" value="APH"/>
    <property type="match status" value="1"/>
</dbReference>
<dbReference type="SUPFAM" id="SSF56112">
    <property type="entry name" value="Protein kinase-like (PK-like)"/>
    <property type="match status" value="1"/>
</dbReference>
<sequence>MAVYTHISETDLKTFLASYDIGNALVLKGIAEGVENSNFFLQTERGFFILTLYEKRVEEKDLPFFLGLMEHLSRRGLNCPQPVHNRSGHALGRLAGRPAVIVTFLEGVGADVADARRCAAVGEALARLHQAGADFAGKRTNALGLAAWRPLFETVRDRADTVAPALAATIAEELDFLEAHWPRALPQGVIHADLFPDNVLFRGETLSGLIDFYFACVDAYAYDIAICLNAWCFEPDLTFNIGKGLAFFTGYEHVRKLTAEEAAALPVLARGGALRFALTRLVDWLNVPKGAMVNPKDPLEYMGKLAFHQTVGTVRELGLLR</sequence>
<gene>
    <name evidence="1" type="primary">thrB</name>
    <name type="ordered locus">Bind_2334</name>
</gene>
<proteinExistence type="inferred from homology"/>
<name>KHSE_BEII9</name>